<accession>P04752</accession>
<accession>B7ZR72</accession>
<accession>Q5D0D1</accession>
<feature type="initiator methionine" description="Removed">
    <location>
        <position position="1"/>
    </location>
</feature>
<feature type="chain" id="PRO_0000442831" description="Actin, alpha skeletal muscle 3, intermediate form" evidence="1">
    <location>
        <begin position="2"/>
        <end position="377"/>
    </location>
</feature>
<feature type="chain" id="PRO_0000442832" description="Actin, alpha skeletal muscle 3" evidence="1">
    <location>
        <begin position="3"/>
        <end position="377"/>
    </location>
</feature>
<feature type="modified residue" description="N-acetylcysteine; in intermediate form" evidence="1">
    <location>
        <position position="2"/>
    </location>
</feature>
<feature type="modified residue" description="N-acetylaspartate; in Actin, alpha skeletal muscle 3" evidence="4">
    <location>
        <position position="3"/>
    </location>
</feature>
<feature type="modified residue" description="Methionine (R)-sulfoxide" evidence="3">
    <location>
        <position position="46"/>
    </location>
</feature>
<feature type="modified residue" description="Methionine (R)-sulfoxide" evidence="3">
    <location>
        <position position="49"/>
    </location>
</feature>
<feature type="modified residue" description="Tele-methylhistidine" evidence="4">
    <location>
        <position position="75"/>
    </location>
</feature>
<feature type="modified residue" description="N6-methyllysine" evidence="2">
    <location>
        <position position="86"/>
    </location>
</feature>
<name>ACT3_XENLA</name>
<comment type="function">
    <text>Actins are highly conserved proteins that are involved in various types of cell motility.</text>
</comment>
<comment type="catalytic activity">
    <reaction evidence="5">
        <text>ATP + H2O = ADP + phosphate + H(+)</text>
        <dbReference type="Rhea" id="RHEA:13065"/>
        <dbReference type="ChEBI" id="CHEBI:15377"/>
        <dbReference type="ChEBI" id="CHEBI:15378"/>
        <dbReference type="ChEBI" id="CHEBI:30616"/>
        <dbReference type="ChEBI" id="CHEBI:43474"/>
        <dbReference type="ChEBI" id="CHEBI:456216"/>
    </reaction>
</comment>
<comment type="subunit">
    <text>Polymerization of globular actin (G-actin) leads to a structural filament (F-actin) in the form of a two-stranded helix. Each actin can bind to 4 others.</text>
</comment>
<comment type="subcellular location">
    <subcellularLocation>
        <location>Cytoplasm</location>
        <location>Cytoskeleton</location>
    </subcellularLocation>
</comment>
<comment type="tissue specificity">
    <text evidence="6">Shows overlapping but distinct expression patterns with other actins. In tailbud embryos, expressed in embryonic muscle (myotomes). In adults, expressed exclusively in skeletal muscle.</text>
</comment>
<comment type="developmental stage">
    <text evidence="6">First expressed after neurulation (stage 18), and expressed throughout development.</text>
</comment>
<comment type="PTM">
    <molecule>Actin, alpha skeletal muscle 3, intermediate form</molecule>
    <text evidence="3">N-terminal cleavage of acetylated cysteine of intermediate muscle actin by ACTMAP.</text>
</comment>
<comment type="PTM">
    <text evidence="3">Oxidation of Met-46 and Met-49 by MICALs (MICAL1, MICAL2 or MICAL3) to form methionine sulfoxide promotes actin filament depolymerization. MICAL1 and MICAL2 produce the (R)-S-oxide form. The (R)-S-oxide form is reverted by MSRB1 and MSRB2, which promotes actin repolymerization.</text>
</comment>
<comment type="PTM">
    <text evidence="2">Monomethylation at Lys-86 (K84me1) regulates actin-myosin interaction and actomyosin-dependent processes. Demethylation by ALKBH4 is required for maintaining actomyosin dynamics supporting normal cleavage furrow ingression during cytokinesis and cell migration.</text>
</comment>
<comment type="miscellaneous">
    <text>Xenopus contains at least three sarcomeric alpha actin genes that are preferentially expressed in either heart or skeletal muscle. Due to the tetraploid nature of Xenopus laevis, each of these three alpha actin genes is present in at least two copies.</text>
</comment>
<comment type="miscellaneous">
    <text>PubMed:3172214 suggest that the sequences isolated in PubMed:3009830 (alpha3-II) and PubMed:3172214 (alpha3-I) may represent paralogous genes in tetraploid Xenopus laevis.</text>
</comment>
<comment type="miscellaneous">
    <text>The cardiac versus skeletal expression patterns of actins are probably sequence-dependent; Xenopus cardiac actins contain a Glu at position 3 of the mature peptide, whereas skeletal actins contain an Asp at this position.</text>
</comment>
<comment type="similarity">
    <text evidence="7">Belongs to the actin family.</text>
</comment>
<gene>
    <name type="primary">act3</name>
</gene>
<proteinExistence type="evidence at transcript level"/>
<evidence type="ECO:0000250" key="1">
    <source>
        <dbReference type="UniProtKB" id="P62737"/>
    </source>
</evidence>
<evidence type="ECO:0000250" key="2">
    <source>
        <dbReference type="UniProtKB" id="P68133"/>
    </source>
</evidence>
<evidence type="ECO:0000250" key="3">
    <source>
        <dbReference type="UniProtKB" id="P68134"/>
    </source>
</evidence>
<evidence type="ECO:0000250" key="4">
    <source>
        <dbReference type="UniProtKB" id="P68135"/>
    </source>
</evidence>
<evidence type="ECO:0000250" key="5">
    <source>
        <dbReference type="UniProtKB" id="P68137"/>
    </source>
</evidence>
<evidence type="ECO:0000269" key="6">
    <source>
    </source>
</evidence>
<evidence type="ECO:0000305" key="7"/>
<reference key="1">
    <citation type="journal article" date="1986" name="J. Mol. Biol.">
        <title>Isolation and characterization of sarcomeric actin genes expressed in Xenopus laevis embryos.</title>
        <authorList>
            <person name="Stutz F."/>
            <person name="Spohr G."/>
        </authorList>
    </citation>
    <scope>NUCLEOTIDE SEQUENCE [MRNA]</scope>
    <scope>NUCLEOTIDE SEQUENCE [GENOMIC DNA] OF 1-43</scope>
</reference>
<reference key="2">
    <citation type="journal article" date="1988" name="J. Mol. Biol.">
        <title>A third striated muscle actin gene is expressed during early development in the amphibian Xenopus laevis.</title>
        <authorList>
            <person name="Mohun T.J."/>
            <person name="Garrett N."/>
            <person name="Stutz F."/>
            <person name="Spohr G."/>
        </authorList>
    </citation>
    <scope>NUCLEOTIDE SEQUENCE [GENOMIC DNA]</scope>
    <scope>TISSUE SPECIFICITY</scope>
    <scope>DEVELOPMENTAL STAGE</scope>
</reference>
<reference key="3">
    <citation type="submission" date="2008-11" db="EMBL/GenBank/DDBJ databases">
        <authorList>
            <consortium name="NIH - Xenopus Gene Collection (XGC) project"/>
        </authorList>
    </citation>
    <scope>NUCLEOTIDE SEQUENCE [LARGE SCALE MRNA]</scope>
    <source>
        <tissue>Oocyte</tissue>
        <tissue>Tail bud</tissue>
    </source>
</reference>
<dbReference type="EC" id="3.6.4.-" evidence="5"/>
<dbReference type="EMBL" id="X03470">
    <property type="protein sequence ID" value="CAA27187.1"/>
    <property type="molecule type" value="mRNA"/>
</dbReference>
<dbReference type="EMBL" id="X12525">
    <property type="protein sequence ID" value="CAA31041.1"/>
    <property type="molecule type" value="Genomic_DNA"/>
</dbReference>
<dbReference type="EMBL" id="BC041199">
    <property type="protein sequence ID" value="AAH41199.1"/>
    <property type="molecule type" value="mRNA"/>
</dbReference>
<dbReference type="EMBL" id="BC170065">
    <property type="protein sequence ID" value="AAI70065.1"/>
    <property type="molecule type" value="mRNA"/>
</dbReference>
<dbReference type="PIR" id="B24848">
    <property type="entry name" value="B24848"/>
</dbReference>
<dbReference type="RefSeq" id="NP_001082366.1">
    <property type="nucleotide sequence ID" value="NM_001088897.2"/>
</dbReference>
<dbReference type="RefSeq" id="NP_001090199.1">
    <property type="nucleotide sequence ID" value="NM_001096730.1"/>
</dbReference>
<dbReference type="SMR" id="P04752"/>
<dbReference type="DNASU" id="398426"/>
<dbReference type="GeneID" id="398426"/>
<dbReference type="GeneID" id="779096"/>
<dbReference type="KEGG" id="xla:398426"/>
<dbReference type="KEGG" id="xla:779096"/>
<dbReference type="AGR" id="Xenbase:XB-GENE-6253091"/>
<dbReference type="CTD" id="398426"/>
<dbReference type="CTD" id="779096"/>
<dbReference type="Xenbase" id="XB-GENE-6253091">
    <property type="gene designation" value="acta4.L"/>
</dbReference>
<dbReference type="OMA" id="YPRMSTT"/>
<dbReference type="OrthoDB" id="9922428at2759"/>
<dbReference type="Proteomes" id="UP000186698">
    <property type="component" value="Chromosome 4L"/>
</dbReference>
<dbReference type="Proteomes" id="UP000186698">
    <property type="component" value="Chromosome 4S"/>
</dbReference>
<dbReference type="Bgee" id="398426">
    <property type="expression patterns" value="Expressed in muscle tissue and 15 other cell types or tissues"/>
</dbReference>
<dbReference type="GO" id="GO:0015629">
    <property type="term" value="C:actin cytoskeleton"/>
    <property type="evidence" value="ECO:0000318"/>
    <property type="project" value="GO_Central"/>
</dbReference>
<dbReference type="GO" id="GO:0005737">
    <property type="term" value="C:cytoplasm"/>
    <property type="evidence" value="ECO:0007669"/>
    <property type="project" value="UniProtKB-KW"/>
</dbReference>
<dbReference type="GO" id="GO:0005524">
    <property type="term" value="F:ATP binding"/>
    <property type="evidence" value="ECO:0007669"/>
    <property type="project" value="UniProtKB-KW"/>
</dbReference>
<dbReference type="GO" id="GO:0016787">
    <property type="term" value="F:hydrolase activity"/>
    <property type="evidence" value="ECO:0007669"/>
    <property type="project" value="UniProtKB-KW"/>
</dbReference>
<dbReference type="CDD" id="cd10224">
    <property type="entry name" value="ASKHA_NBD_actin"/>
    <property type="match status" value="1"/>
</dbReference>
<dbReference type="FunFam" id="2.30.36.70:FF:000001">
    <property type="entry name" value="Actin, alpha skeletal muscle"/>
    <property type="match status" value="1"/>
</dbReference>
<dbReference type="FunFam" id="3.30.420.40:FF:000131">
    <property type="entry name" value="Actin, alpha skeletal muscle"/>
    <property type="match status" value="1"/>
</dbReference>
<dbReference type="FunFam" id="3.30.420.40:FF:000291">
    <property type="entry name" value="Actin, alpha skeletal muscle"/>
    <property type="match status" value="1"/>
</dbReference>
<dbReference type="FunFam" id="3.90.640.10:FF:000047">
    <property type="entry name" value="Actin, alpha skeletal muscle"/>
    <property type="match status" value="1"/>
</dbReference>
<dbReference type="FunFam" id="3.30.420.40:FF:000058">
    <property type="entry name" value="Putative actin-related protein 5"/>
    <property type="match status" value="1"/>
</dbReference>
<dbReference type="Gene3D" id="3.30.420.40">
    <property type="match status" value="2"/>
</dbReference>
<dbReference type="Gene3D" id="3.90.640.10">
    <property type="entry name" value="Actin, Chain A, domain 4"/>
    <property type="match status" value="1"/>
</dbReference>
<dbReference type="InterPro" id="IPR004000">
    <property type="entry name" value="Actin"/>
</dbReference>
<dbReference type="InterPro" id="IPR020902">
    <property type="entry name" value="Actin/actin-like_CS"/>
</dbReference>
<dbReference type="InterPro" id="IPR004001">
    <property type="entry name" value="Actin_CS"/>
</dbReference>
<dbReference type="InterPro" id="IPR043129">
    <property type="entry name" value="ATPase_NBD"/>
</dbReference>
<dbReference type="PANTHER" id="PTHR11937">
    <property type="entry name" value="ACTIN"/>
    <property type="match status" value="1"/>
</dbReference>
<dbReference type="Pfam" id="PF00022">
    <property type="entry name" value="Actin"/>
    <property type="match status" value="1"/>
</dbReference>
<dbReference type="PRINTS" id="PR00190">
    <property type="entry name" value="ACTIN"/>
</dbReference>
<dbReference type="SMART" id="SM00268">
    <property type="entry name" value="ACTIN"/>
    <property type="match status" value="1"/>
</dbReference>
<dbReference type="SUPFAM" id="SSF53067">
    <property type="entry name" value="Actin-like ATPase domain"/>
    <property type="match status" value="2"/>
</dbReference>
<dbReference type="PROSITE" id="PS00406">
    <property type="entry name" value="ACTINS_1"/>
    <property type="match status" value="1"/>
</dbReference>
<dbReference type="PROSITE" id="PS00432">
    <property type="entry name" value="ACTINS_2"/>
    <property type="match status" value="1"/>
</dbReference>
<dbReference type="PROSITE" id="PS01132">
    <property type="entry name" value="ACTINS_ACT_LIKE"/>
    <property type="match status" value="1"/>
</dbReference>
<sequence length="377" mass="41984">MCDDDETTALVCDNGSGLVKAGFAGDDAPRAVFPSIVGRPRHQGVMVGMGQKDSYVGDEAQSKRGILTLKYPIEHGIITNWDDMEKIWHHTFYNELRVAPEEHPTLLTEAPLNPKANREKMTQIMFETFNVPAMYVAIQAVLSLYASGRTTGIVLDSGDGVTHNVPIYEGYALPHAIQRLDLAGRDLTDYLMKILTERGYSFVTTAEREIVRDIKEKLAYVALDFENEMATAASSSSLEKSYELPDGQVITIGNERFRCPETLFQPSFIGMESAGIHETTYNSIMKCDIDIRKDLYANNVLSGGTTMYPGIADRMQKEITALAPSTMKIKIIAPPERKYSVWIGGSILASLSTFQQMWITKQEYDEAGPSIVHRKCF</sequence>
<keyword id="KW-0007">Acetylation</keyword>
<keyword id="KW-0067">ATP-binding</keyword>
<keyword id="KW-0963">Cytoplasm</keyword>
<keyword id="KW-0206">Cytoskeleton</keyword>
<keyword id="KW-0378">Hydrolase</keyword>
<keyword id="KW-0488">Methylation</keyword>
<keyword id="KW-0514">Muscle protein</keyword>
<keyword id="KW-0547">Nucleotide-binding</keyword>
<keyword id="KW-0558">Oxidation</keyword>
<keyword id="KW-1185">Reference proteome</keyword>
<protein>
    <recommendedName>
        <fullName>Actin, alpha skeletal muscle 3</fullName>
        <ecNumber evidence="5">3.6.4.-</ecNumber>
    </recommendedName>
    <alternativeName>
        <fullName>Actin alpha 3</fullName>
    </alternativeName>
    <alternativeName>
        <fullName>Femoral (alpha 3) actin</fullName>
    </alternativeName>
    <component>
        <recommendedName>
            <fullName>Actin, alpha skeletal muscle 3, intermediate form</fullName>
        </recommendedName>
    </component>
</protein>
<organism>
    <name type="scientific">Xenopus laevis</name>
    <name type="common">African clawed frog</name>
    <dbReference type="NCBI Taxonomy" id="8355"/>
    <lineage>
        <taxon>Eukaryota</taxon>
        <taxon>Metazoa</taxon>
        <taxon>Chordata</taxon>
        <taxon>Craniata</taxon>
        <taxon>Vertebrata</taxon>
        <taxon>Euteleostomi</taxon>
        <taxon>Amphibia</taxon>
        <taxon>Batrachia</taxon>
        <taxon>Anura</taxon>
        <taxon>Pipoidea</taxon>
        <taxon>Pipidae</taxon>
        <taxon>Xenopodinae</taxon>
        <taxon>Xenopus</taxon>
        <taxon>Xenopus</taxon>
    </lineage>
</organism>